<name>URE1_STAAC</name>
<comment type="catalytic activity">
    <reaction evidence="1">
        <text>urea + 2 H2O + H(+) = hydrogencarbonate + 2 NH4(+)</text>
        <dbReference type="Rhea" id="RHEA:20557"/>
        <dbReference type="ChEBI" id="CHEBI:15377"/>
        <dbReference type="ChEBI" id="CHEBI:15378"/>
        <dbReference type="ChEBI" id="CHEBI:16199"/>
        <dbReference type="ChEBI" id="CHEBI:17544"/>
        <dbReference type="ChEBI" id="CHEBI:28938"/>
        <dbReference type="EC" id="3.5.1.5"/>
    </reaction>
</comment>
<comment type="cofactor">
    <cofactor evidence="1">
        <name>Ni cation</name>
        <dbReference type="ChEBI" id="CHEBI:25516"/>
    </cofactor>
    <text evidence="1">Binds 2 nickel ions per subunit.</text>
</comment>
<comment type="pathway">
    <text evidence="1">Nitrogen metabolism; urea degradation; CO(2) and NH(3) from urea (urease route): step 1/1.</text>
</comment>
<comment type="subunit">
    <text evidence="1">Heterotrimer of UreA (gamma), UreB (beta) and UreC (alpha) subunits. Three heterotrimers associate to form the active enzyme.</text>
</comment>
<comment type="subcellular location">
    <subcellularLocation>
        <location evidence="1">Cytoplasm</location>
    </subcellularLocation>
</comment>
<comment type="PTM">
    <text evidence="1">Carboxylation allows a single lysine to coordinate two nickel ions.</text>
</comment>
<comment type="similarity">
    <text evidence="1">Belongs to the metallo-dependent hydrolases superfamily. Urease alpha subunit family.</text>
</comment>
<sequence>MSFKMTQNQYTSLYGPTVGDSIRLGDTNLFAQIEKDYAVYGEEATFGGGKSIRDGMAQNPRVTRDDVNVADLVISNAVIIDYDKVVKADIGIKNGYIFAIGNAGNPDIMDNVDIIIGSTTDIIAAEGKIVTAGGIDTHVHFINPEQAEVALESGITTHIGGGTGASEGSKATTVTPGPWHIHRMLEAAEGLPINVGFTGKGQATNPTALIEQINAGAIGLKVHEDWGATPSALSHALDVADEFDVQIALHADTLNEAGFMEDTMAAVKDRVLHMYHTEGAGGGHAPDLIKSAAFSNILPSSTNPTLPYTHNTVDEHLDMVMITHHLNAAIPEDIAFADSRIRKETIAAEDVLQDMGVFSMISSDSQAMGRVGEVITRTWQVAHRMKEQRGPLDGDFEHNDNNRIKRYIAKYTINPAITHGISEYVGSIEPGKLADIVLWDPIFFGVKPELVVKGGLINSAVNGDANGSIPTSEPMKYRKMYGQYGGNLTSTSMTFVSKTAYENGINRALNLKRMVRPVKNIRQLSKADMKNNSATPKLDVDPQTYEVYVDGEKITSNAATELPLTQRYFLF</sequence>
<feature type="chain" id="PRO_0000067552" description="Urease subunit alpha">
    <location>
        <begin position="1"/>
        <end position="571"/>
    </location>
</feature>
<feature type="domain" description="Urease" evidence="1">
    <location>
        <begin position="133"/>
        <end position="571"/>
    </location>
</feature>
<feature type="active site" description="Proton donor" evidence="1">
    <location>
        <position position="324"/>
    </location>
</feature>
<feature type="binding site" evidence="1">
    <location>
        <position position="138"/>
    </location>
    <ligand>
        <name>Ni(2+)</name>
        <dbReference type="ChEBI" id="CHEBI:49786"/>
        <label>1</label>
    </ligand>
</feature>
<feature type="binding site" evidence="1">
    <location>
        <position position="140"/>
    </location>
    <ligand>
        <name>Ni(2+)</name>
        <dbReference type="ChEBI" id="CHEBI:49786"/>
        <label>1</label>
    </ligand>
</feature>
<feature type="binding site" description="via carbamate group" evidence="1">
    <location>
        <position position="221"/>
    </location>
    <ligand>
        <name>Ni(2+)</name>
        <dbReference type="ChEBI" id="CHEBI:49786"/>
        <label>1</label>
    </ligand>
</feature>
<feature type="binding site" description="via carbamate group" evidence="1">
    <location>
        <position position="221"/>
    </location>
    <ligand>
        <name>Ni(2+)</name>
        <dbReference type="ChEBI" id="CHEBI:49786"/>
        <label>2</label>
    </ligand>
</feature>
<feature type="binding site" evidence="1">
    <location>
        <position position="223"/>
    </location>
    <ligand>
        <name>substrate</name>
    </ligand>
</feature>
<feature type="binding site" evidence="1">
    <location>
        <position position="250"/>
    </location>
    <ligand>
        <name>Ni(2+)</name>
        <dbReference type="ChEBI" id="CHEBI:49786"/>
        <label>2</label>
    </ligand>
</feature>
<feature type="binding site" evidence="1">
    <location>
        <position position="276"/>
    </location>
    <ligand>
        <name>Ni(2+)</name>
        <dbReference type="ChEBI" id="CHEBI:49786"/>
        <label>2</label>
    </ligand>
</feature>
<feature type="binding site" evidence="1">
    <location>
        <position position="364"/>
    </location>
    <ligand>
        <name>Ni(2+)</name>
        <dbReference type="ChEBI" id="CHEBI:49786"/>
        <label>1</label>
    </ligand>
</feature>
<feature type="modified residue" description="N6-carboxylysine" evidence="1">
    <location>
        <position position="221"/>
    </location>
</feature>
<gene>
    <name evidence="1" type="primary">ureC</name>
    <name type="ordered locus">SACOL2282</name>
</gene>
<protein>
    <recommendedName>
        <fullName evidence="1">Urease subunit alpha</fullName>
        <ecNumber evidence="1">3.5.1.5</ecNumber>
    </recommendedName>
    <alternativeName>
        <fullName evidence="1">Urea amidohydrolase subunit alpha</fullName>
    </alternativeName>
</protein>
<proteinExistence type="inferred from homology"/>
<dbReference type="EC" id="3.5.1.5" evidence="1"/>
<dbReference type="EMBL" id="CP000046">
    <property type="protein sequence ID" value="AAW38502.1"/>
    <property type="molecule type" value="Genomic_DNA"/>
</dbReference>
<dbReference type="RefSeq" id="WP_000008673.1">
    <property type="nucleotide sequence ID" value="NZ_JBGOFO010000004.1"/>
</dbReference>
<dbReference type="SMR" id="Q5HDR8"/>
<dbReference type="KEGG" id="sac:SACOL2282"/>
<dbReference type="HOGENOM" id="CLU_000980_0_0_9"/>
<dbReference type="UniPathway" id="UPA00258">
    <property type="reaction ID" value="UER00370"/>
</dbReference>
<dbReference type="Proteomes" id="UP000000530">
    <property type="component" value="Chromosome"/>
</dbReference>
<dbReference type="GO" id="GO:0005737">
    <property type="term" value="C:cytoplasm"/>
    <property type="evidence" value="ECO:0007669"/>
    <property type="project" value="UniProtKB-SubCell"/>
</dbReference>
<dbReference type="GO" id="GO:0016151">
    <property type="term" value="F:nickel cation binding"/>
    <property type="evidence" value="ECO:0007669"/>
    <property type="project" value="UniProtKB-UniRule"/>
</dbReference>
<dbReference type="GO" id="GO:0009039">
    <property type="term" value="F:urease activity"/>
    <property type="evidence" value="ECO:0007669"/>
    <property type="project" value="UniProtKB-UniRule"/>
</dbReference>
<dbReference type="GO" id="GO:0043419">
    <property type="term" value="P:urea catabolic process"/>
    <property type="evidence" value="ECO:0007669"/>
    <property type="project" value="UniProtKB-UniRule"/>
</dbReference>
<dbReference type="CDD" id="cd00375">
    <property type="entry name" value="Urease_alpha"/>
    <property type="match status" value="1"/>
</dbReference>
<dbReference type="Gene3D" id="3.20.20.140">
    <property type="entry name" value="Metal-dependent hydrolases"/>
    <property type="match status" value="1"/>
</dbReference>
<dbReference type="Gene3D" id="2.30.40.10">
    <property type="entry name" value="Urease, subunit C, domain 1"/>
    <property type="match status" value="1"/>
</dbReference>
<dbReference type="HAMAP" id="MF_01953">
    <property type="entry name" value="Urease_alpha"/>
    <property type="match status" value="1"/>
</dbReference>
<dbReference type="InterPro" id="IPR006680">
    <property type="entry name" value="Amidohydro-rel"/>
</dbReference>
<dbReference type="InterPro" id="IPR011059">
    <property type="entry name" value="Metal-dep_hydrolase_composite"/>
</dbReference>
<dbReference type="InterPro" id="IPR032466">
    <property type="entry name" value="Metal_Hydrolase"/>
</dbReference>
<dbReference type="InterPro" id="IPR011612">
    <property type="entry name" value="Urease_alpha_N_dom"/>
</dbReference>
<dbReference type="InterPro" id="IPR050112">
    <property type="entry name" value="Urease_alpha_subunit"/>
</dbReference>
<dbReference type="InterPro" id="IPR017950">
    <property type="entry name" value="Urease_AS"/>
</dbReference>
<dbReference type="InterPro" id="IPR005848">
    <property type="entry name" value="Urease_asu"/>
</dbReference>
<dbReference type="InterPro" id="IPR017951">
    <property type="entry name" value="Urease_asu_c"/>
</dbReference>
<dbReference type="InterPro" id="IPR029754">
    <property type="entry name" value="Urease_Ni-bd"/>
</dbReference>
<dbReference type="NCBIfam" id="NF009686">
    <property type="entry name" value="PRK13207.1"/>
    <property type="match status" value="1"/>
</dbReference>
<dbReference type="NCBIfam" id="TIGR01792">
    <property type="entry name" value="urease_alph"/>
    <property type="match status" value="1"/>
</dbReference>
<dbReference type="PANTHER" id="PTHR43440">
    <property type="entry name" value="UREASE"/>
    <property type="match status" value="1"/>
</dbReference>
<dbReference type="PANTHER" id="PTHR43440:SF1">
    <property type="entry name" value="UREASE"/>
    <property type="match status" value="1"/>
</dbReference>
<dbReference type="Pfam" id="PF01979">
    <property type="entry name" value="Amidohydro_1"/>
    <property type="match status" value="1"/>
</dbReference>
<dbReference type="Pfam" id="PF00449">
    <property type="entry name" value="Urease_alpha"/>
    <property type="match status" value="1"/>
</dbReference>
<dbReference type="PRINTS" id="PR01752">
    <property type="entry name" value="UREASE"/>
</dbReference>
<dbReference type="SUPFAM" id="SSF51338">
    <property type="entry name" value="Composite domain of metallo-dependent hydrolases"/>
    <property type="match status" value="1"/>
</dbReference>
<dbReference type="SUPFAM" id="SSF51556">
    <property type="entry name" value="Metallo-dependent hydrolases"/>
    <property type="match status" value="1"/>
</dbReference>
<dbReference type="PROSITE" id="PS01120">
    <property type="entry name" value="UREASE_1"/>
    <property type="match status" value="1"/>
</dbReference>
<dbReference type="PROSITE" id="PS00145">
    <property type="entry name" value="UREASE_2"/>
    <property type="match status" value="1"/>
</dbReference>
<dbReference type="PROSITE" id="PS51368">
    <property type="entry name" value="UREASE_3"/>
    <property type="match status" value="1"/>
</dbReference>
<reference key="1">
    <citation type="journal article" date="2005" name="J. Bacteriol.">
        <title>Insights on evolution of virulence and resistance from the complete genome analysis of an early methicillin-resistant Staphylococcus aureus strain and a biofilm-producing methicillin-resistant Staphylococcus epidermidis strain.</title>
        <authorList>
            <person name="Gill S.R."/>
            <person name="Fouts D.E."/>
            <person name="Archer G.L."/>
            <person name="Mongodin E.F."/>
            <person name="DeBoy R.T."/>
            <person name="Ravel J."/>
            <person name="Paulsen I.T."/>
            <person name="Kolonay J.F."/>
            <person name="Brinkac L.M."/>
            <person name="Beanan M.J."/>
            <person name="Dodson R.J."/>
            <person name="Daugherty S.C."/>
            <person name="Madupu R."/>
            <person name="Angiuoli S.V."/>
            <person name="Durkin A.S."/>
            <person name="Haft D.H."/>
            <person name="Vamathevan J.J."/>
            <person name="Khouri H."/>
            <person name="Utterback T.R."/>
            <person name="Lee C."/>
            <person name="Dimitrov G."/>
            <person name="Jiang L."/>
            <person name="Qin H."/>
            <person name="Weidman J."/>
            <person name="Tran K."/>
            <person name="Kang K.H."/>
            <person name="Hance I.R."/>
            <person name="Nelson K.E."/>
            <person name="Fraser C.M."/>
        </authorList>
    </citation>
    <scope>NUCLEOTIDE SEQUENCE [LARGE SCALE GENOMIC DNA]</scope>
    <source>
        <strain>COL</strain>
    </source>
</reference>
<evidence type="ECO:0000255" key="1">
    <source>
        <dbReference type="HAMAP-Rule" id="MF_01953"/>
    </source>
</evidence>
<accession>Q5HDR8</accession>
<organism>
    <name type="scientific">Staphylococcus aureus (strain COL)</name>
    <dbReference type="NCBI Taxonomy" id="93062"/>
    <lineage>
        <taxon>Bacteria</taxon>
        <taxon>Bacillati</taxon>
        <taxon>Bacillota</taxon>
        <taxon>Bacilli</taxon>
        <taxon>Bacillales</taxon>
        <taxon>Staphylococcaceae</taxon>
        <taxon>Staphylococcus</taxon>
    </lineage>
</organism>
<keyword id="KW-0963">Cytoplasm</keyword>
<keyword id="KW-0378">Hydrolase</keyword>
<keyword id="KW-0479">Metal-binding</keyword>
<keyword id="KW-0533">Nickel</keyword>